<name>SURE_SHESA</name>
<feature type="chain" id="PRO_0000335279" description="5'-nucleotidase SurE">
    <location>
        <begin position="1"/>
        <end position="249"/>
    </location>
</feature>
<feature type="binding site" evidence="1">
    <location>
        <position position="9"/>
    </location>
    <ligand>
        <name>a divalent metal cation</name>
        <dbReference type="ChEBI" id="CHEBI:60240"/>
    </ligand>
</feature>
<feature type="binding site" evidence="1">
    <location>
        <position position="10"/>
    </location>
    <ligand>
        <name>a divalent metal cation</name>
        <dbReference type="ChEBI" id="CHEBI:60240"/>
    </ligand>
</feature>
<feature type="binding site" evidence="1">
    <location>
        <position position="40"/>
    </location>
    <ligand>
        <name>a divalent metal cation</name>
        <dbReference type="ChEBI" id="CHEBI:60240"/>
    </ligand>
</feature>
<feature type="binding site" evidence="1">
    <location>
        <position position="92"/>
    </location>
    <ligand>
        <name>a divalent metal cation</name>
        <dbReference type="ChEBI" id="CHEBI:60240"/>
    </ligand>
</feature>
<gene>
    <name evidence="1" type="primary">surE</name>
    <name type="ordered locus">Shewana3_1121</name>
</gene>
<dbReference type="EC" id="3.1.3.5" evidence="1"/>
<dbReference type="EMBL" id="CP000469">
    <property type="protein sequence ID" value="ABK47356.1"/>
    <property type="molecule type" value="Genomic_DNA"/>
</dbReference>
<dbReference type="RefSeq" id="WP_011716221.1">
    <property type="nucleotide sequence ID" value="NC_008577.1"/>
</dbReference>
<dbReference type="SMR" id="A0KU87"/>
<dbReference type="STRING" id="94122.Shewana3_1121"/>
<dbReference type="KEGG" id="shn:Shewana3_1121"/>
<dbReference type="eggNOG" id="COG0496">
    <property type="taxonomic scope" value="Bacteria"/>
</dbReference>
<dbReference type="HOGENOM" id="CLU_045192_1_2_6"/>
<dbReference type="OrthoDB" id="9780815at2"/>
<dbReference type="Proteomes" id="UP000002589">
    <property type="component" value="Chromosome"/>
</dbReference>
<dbReference type="GO" id="GO:0005737">
    <property type="term" value="C:cytoplasm"/>
    <property type="evidence" value="ECO:0007669"/>
    <property type="project" value="UniProtKB-SubCell"/>
</dbReference>
<dbReference type="GO" id="GO:0008254">
    <property type="term" value="F:3'-nucleotidase activity"/>
    <property type="evidence" value="ECO:0007669"/>
    <property type="project" value="TreeGrafter"/>
</dbReference>
<dbReference type="GO" id="GO:0008253">
    <property type="term" value="F:5'-nucleotidase activity"/>
    <property type="evidence" value="ECO:0007669"/>
    <property type="project" value="UniProtKB-UniRule"/>
</dbReference>
<dbReference type="GO" id="GO:0004309">
    <property type="term" value="F:exopolyphosphatase activity"/>
    <property type="evidence" value="ECO:0007669"/>
    <property type="project" value="TreeGrafter"/>
</dbReference>
<dbReference type="GO" id="GO:0046872">
    <property type="term" value="F:metal ion binding"/>
    <property type="evidence" value="ECO:0007669"/>
    <property type="project" value="UniProtKB-UniRule"/>
</dbReference>
<dbReference type="GO" id="GO:0000166">
    <property type="term" value="F:nucleotide binding"/>
    <property type="evidence" value="ECO:0007669"/>
    <property type="project" value="UniProtKB-KW"/>
</dbReference>
<dbReference type="FunFam" id="3.40.1210.10:FF:000001">
    <property type="entry name" value="5'/3'-nucleotidase SurE"/>
    <property type="match status" value="1"/>
</dbReference>
<dbReference type="Gene3D" id="3.40.1210.10">
    <property type="entry name" value="Survival protein SurE-like phosphatase/nucleotidase"/>
    <property type="match status" value="1"/>
</dbReference>
<dbReference type="HAMAP" id="MF_00060">
    <property type="entry name" value="SurE"/>
    <property type="match status" value="1"/>
</dbReference>
<dbReference type="InterPro" id="IPR030048">
    <property type="entry name" value="SurE"/>
</dbReference>
<dbReference type="InterPro" id="IPR002828">
    <property type="entry name" value="SurE-like_Pase/nucleotidase"/>
</dbReference>
<dbReference type="InterPro" id="IPR036523">
    <property type="entry name" value="SurE-like_sf"/>
</dbReference>
<dbReference type="NCBIfam" id="NF001489">
    <property type="entry name" value="PRK00346.1-3"/>
    <property type="match status" value="1"/>
</dbReference>
<dbReference type="NCBIfam" id="NF001490">
    <property type="entry name" value="PRK00346.1-4"/>
    <property type="match status" value="1"/>
</dbReference>
<dbReference type="NCBIfam" id="TIGR00087">
    <property type="entry name" value="surE"/>
    <property type="match status" value="1"/>
</dbReference>
<dbReference type="PANTHER" id="PTHR30457">
    <property type="entry name" value="5'-NUCLEOTIDASE SURE"/>
    <property type="match status" value="1"/>
</dbReference>
<dbReference type="PANTHER" id="PTHR30457:SF12">
    <property type="entry name" value="5'_3'-NUCLEOTIDASE SURE"/>
    <property type="match status" value="1"/>
</dbReference>
<dbReference type="Pfam" id="PF01975">
    <property type="entry name" value="SurE"/>
    <property type="match status" value="1"/>
</dbReference>
<dbReference type="SUPFAM" id="SSF64167">
    <property type="entry name" value="SurE-like"/>
    <property type="match status" value="1"/>
</dbReference>
<comment type="function">
    <text evidence="1">Nucleotidase that shows phosphatase activity on nucleoside 5'-monophosphates.</text>
</comment>
<comment type="catalytic activity">
    <reaction evidence="1">
        <text>a ribonucleoside 5'-phosphate + H2O = a ribonucleoside + phosphate</text>
        <dbReference type="Rhea" id="RHEA:12484"/>
        <dbReference type="ChEBI" id="CHEBI:15377"/>
        <dbReference type="ChEBI" id="CHEBI:18254"/>
        <dbReference type="ChEBI" id="CHEBI:43474"/>
        <dbReference type="ChEBI" id="CHEBI:58043"/>
        <dbReference type="EC" id="3.1.3.5"/>
    </reaction>
</comment>
<comment type="cofactor">
    <cofactor evidence="1">
        <name>a divalent metal cation</name>
        <dbReference type="ChEBI" id="CHEBI:60240"/>
    </cofactor>
    <text evidence="1">Binds 1 divalent metal cation per subunit.</text>
</comment>
<comment type="subcellular location">
    <subcellularLocation>
        <location evidence="1">Cytoplasm</location>
    </subcellularLocation>
</comment>
<comment type="similarity">
    <text evidence="1">Belongs to the SurE nucleotidase family.</text>
</comment>
<organism>
    <name type="scientific">Shewanella sp. (strain ANA-3)</name>
    <dbReference type="NCBI Taxonomy" id="94122"/>
    <lineage>
        <taxon>Bacteria</taxon>
        <taxon>Pseudomonadati</taxon>
        <taxon>Pseudomonadota</taxon>
        <taxon>Gammaproteobacteria</taxon>
        <taxon>Alteromonadales</taxon>
        <taxon>Shewanellaceae</taxon>
        <taxon>Shewanella</taxon>
    </lineage>
</organism>
<proteinExistence type="inferred from homology"/>
<reference key="1">
    <citation type="submission" date="2006-09" db="EMBL/GenBank/DDBJ databases">
        <title>Complete sequence of chromosome 1 of Shewanella sp. ANA-3.</title>
        <authorList>
            <person name="Copeland A."/>
            <person name="Lucas S."/>
            <person name="Lapidus A."/>
            <person name="Barry K."/>
            <person name="Detter J.C."/>
            <person name="Glavina del Rio T."/>
            <person name="Hammon N."/>
            <person name="Israni S."/>
            <person name="Dalin E."/>
            <person name="Tice H."/>
            <person name="Pitluck S."/>
            <person name="Chertkov O."/>
            <person name="Brettin T."/>
            <person name="Bruce D."/>
            <person name="Han C."/>
            <person name="Tapia R."/>
            <person name="Gilna P."/>
            <person name="Schmutz J."/>
            <person name="Larimer F."/>
            <person name="Land M."/>
            <person name="Hauser L."/>
            <person name="Kyrpides N."/>
            <person name="Kim E."/>
            <person name="Newman D."/>
            <person name="Salticov C."/>
            <person name="Konstantinidis K."/>
            <person name="Klappenback J."/>
            <person name="Tiedje J."/>
            <person name="Richardson P."/>
        </authorList>
    </citation>
    <scope>NUCLEOTIDE SEQUENCE [LARGE SCALE GENOMIC DNA]</scope>
    <source>
        <strain>ANA-3</strain>
    </source>
</reference>
<accession>A0KU87</accession>
<protein>
    <recommendedName>
        <fullName evidence="1">5'-nucleotidase SurE</fullName>
        <ecNumber evidence="1">3.1.3.5</ecNumber>
    </recommendedName>
    <alternativeName>
        <fullName evidence="1">Nucleoside 5'-monophosphate phosphohydrolase</fullName>
    </alternativeName>
</protein>
<sequence length="249" mass="26569">MIRILVSNDDGVNAPGIRALTEALAEIATVMTVAPDRNCSGASNSLTLTNPLRINRLDNGYISVHGTPTDCVHLAIRELCDGEPDMVVSGINAGANMGDDTLYSGTVAAAMEGRFLGFPAVAISLNGKALKHYHTAAVYARRIVQGLLAHPIASDQILNINVPDLPLDEIKGIRVTRLGARHKAEGIVRTQDPAGKEIFWLGPPGVEQDASEGTDFHAVAHGYVSITPLTVDLTAHRQLSVLQDWVDKI</sequence>
<evidence type="ECO:0000255" key="1">
    <source>
        <dbReference type="HAMAP-Rule" id="MF_00060"/>
    </source>
</evidence>
<keyword id="KW-0963">Cytoplasm</keyword>
<keyword id="KW-0378">Hydrolase</keyword>
<keyword id="KW-0479">Metal-binding</keyword>
<keyword id="KW-0547">Nucleotide-binding</keyword>